<feature type="chain" id="PRO_1000013363" description="Large ribosomal subunit protein bL34">
    <location>
        <begin position="1"/>
        <end position="46"/>
    </location>
</feature>
<dbReference type="EMBL" id="CR936503">
    <property type="protein sequence ID" value="CAI56192.1"/>
    <property type="molecule type" value="Genomic_DNA"/>
</dbReference>
<dbReference type="RefSeq" id="WP_004265830.1">
    <property type="nucleotide sequence ID" value="NC_007576.1"/>
</dbReference>
<dbReference type="SMR" id="Q38UE3"/>
<dbReference type="STRING" id="314315.LCA_1886"/>
<dbReference type="GeneID" id="57132821"/>
<dbReference type="KEGG" id="lsa:LCA_1886"/>
<dbReference type="eggNOG" id="COG0230">
    <property type="taxonomic scope" value="Bacteria"/>
</dbReference>
<dbReference type="HOGENOM" id="CLU_129938_2_0_9"/>
<dbReference type="OrthoDB" id="9804164at2"/>
<dbReference type="Proteomes" id="UP000002707">
    <property type="component" value="Chromosome"/>
</dbReference>
<dbReference type="GO" id="GO:1990904">
    <property type="term" value="C:ribonucleoprotein complex"/>
    <property type="evidence" value="ECO:0007669"/>
    <property type="project" value="UniProtKB-KW"/>
</dbReference>
<dbReference type="GO" id="GO:0005840">
    <property type="term" value="C:ribosome"/>
    <property type="evidence" value="ECO:0007669"/>
    <property type="project" value="UniProtKB-KW"/>
</dbReference>
<dbReference type="GO" id="GO:0003735">
    <property type="term" value="F:structural constituent of ribosome"/>
    <property type="evidence" value="ECO:0007669"/>
    <property type="project" value="InterPro"/>
</dbReference>
<dbReference type="GO" id="GO:0006412">
    <property type="term" value="P:translation"/>
    <property type="evidence" value="ECO:0007669"/>
    <property type="project" value="UniProtKB-UniRule"/>
</dbReference>
<dbReference type="FunFam" id="1.10.287.3980:FF:000001">
    <property type="entry name" value="Mitochondrial ribosomal protein L34"/>
    <property type="match status" value="1"/>
</dbReference>
<dbReference type="Gene3D" id="1.10.287.3980">
    <property type="match status" value="1"/>
</dbReference>
<dbReference type="HAMAP" id="MF_00391">
    <property type="entry name" value="Ribosomal_bL34"/>
    <property type="match status" value="1"/>
</dbReference>
<dbReference type="InterPro" id="IPR000271">
    <property type="entry name" value="Ribosomal_bL34"/>
</dbReference>
<dbReference type="InterPro" id="IPR020939">
    <property type="entry name" value="Ribosomal_bL34_CS"/>
</dbReference>
<dbReference type="NCBIfam" id="TIGR01030">
    <property type="entry name" value="rpmH_bact"/>
    <property type="match status" value="1"/>
</dbReference>
<dbReference type="PANTHER" id="PTHR14503:SF4">
    <property type="entry name" value="LARGE RIBOSOMAL SUBUNIT PROTEIN BL34M"/>
    <property type="match status" value="1"/>
</dbReference>
<dbReference type="PANTHER" id="PTHR14503">
    <property type="entry name" value="MITOCHONDRIAL RIBOSOMAL PROTEIN 34 FAMILY MEMBER"/>
    <property type="match status" value="1"/>
</dbReference>
<dbReference type="Pfam" id="PF00468">
    <property type="entry name" value="Ribosomal_L34"/>
    <property type="match status" value="1"/>
</dbReference>
<dbReference type="PROSITE" id="PS00784">
    <property type="entry name" value="RIBOSOMAL_L34"/>
    <property type="match status" value="1"/>
</dbReference>
<sequence>MTTKRTFQPKKRHKERVHGFMKRMNTKNGRKVLARRRAKGRKVLSA</sequence>
<proteinExistence type="inferred from homology"/>
<accession>Q38UE3</accession>
<protein>
    <recommendedName>
        <fullName evidence="1">Large ribosomal subunit protein bL34</fullName>
    </recommendedName>
    <alternativeName>
        <fullName evidence="2">50S ribosomal protein L34</fullName>
    </alternativeName>
</protein>
<comment type="similarity">
    <text evidence="1">Belongs to the bacterial ribosomal protein bL34 family.</text>
</comment>
<keyword id="KW-1185">Reference proteome</keyword>
<keyword id="KW-0687">Ribonucleoprotein</keyword>
<keyword id="KW-0689">Ribosomal protein</keyword>
<name>RL34_LATSS</name>
<organism>
    <name type="scientific">Latilactobacillus sakei subsp. sakei (strain 23K)</name>
    <name type="common">Lactobacillus sakei subsp. sakei</name>
    <dbReference type="NCBI Taxonomy" id="314315"/>
    <lineage>
        <taxon>Bacteria</taxon>
        <taxon>Bacillati</taxon>
        <taxon>Bacillota</taxon>
        <taxon>Bacilli</taxon>
        <taxon>Lactobacillales</taxon>
        <taxon>Lactobacillaceae</taxon>
        <taxon>Latilactobacillus</taxon>
    </lineage>
</organism>
<gene>
    <name evidence="1" type="primary">rpmH</name>
    <name type="ordered locus">LCA_1886</name>
</gene>
<reference key="1">
    <citation type="journal article" date="2005" name="Nat. Biotechnol.">
        <title>The complete genome sequence of the meat-borne lactic acid bacterium Lactobacillus sakei 23K.</title>
        <authorList>
            <person name="Chaillou S."/>
            <person name="Champomier-Verges M.-C."/>
            <person name="Cornet M."/>
            <person name="Crutz-Le Coq A.-M."/>
            <person name="Dudez A.-M."/>
            <person name="Martin V."/>
            <person name="Beaufils S."/>
            <person name="Darbon-Rongere E."/>
            <person name="Bossy R."/>
            <person name="Loux V."/>
            <person name="Zagorec M."/>
        </authorList>
    </citation>
    <scope>NUCLEOTIDE SEQUENCE [LARGE SCALE GENOMIC DNA]</scope>
    <source>
        <strain>23K</strain>
    </source>
</reference>
<evidence type="ECO:0000255" key="1">
    <source>
        <dbReference type="HAMAP-Rule" id="MF_00391"/>
    </source>
</evidence>
<evidence type="ECO:0000305" key="2"/>